<keyword id="KW-1015">Disulfide bond</keyword>
<keyword id="KW-0256">Endoplasmic reticulum</keyword>
<keyword id="KW-0325">Glycoprotein</keyword>
<keyword id="KW-0378">Hydrolase</keyword>
<keyword id="KW-0443">Lipid metabolism</keyword>
<keyword id="KW-0472">Membrane</keyword>
<keyword id="KW-0492">Microsome</keyword>
<keyword id="KW-1185">Reference proteome</keyword>
<keyword id="KW-0719">Serine esterase</keyword>
<keyword id="KW-0732">Signal</keyword>
<comment type="function">
    <text evidence="5">Involved in the detoxification of xenobiotics and in the activation of ester and amide prodrugs. Hydrolyzes retinyl esters (PubMed:12230550).</text>
</comment>
<comment type="catalytic activity">
    <reaction evidence="4">
        <text>a carboxylic ester + H2O = an alcohol + a carboxylate + H(+)</text>
        <dbReference type="Rhea" id="RHEA:21164"/>
        <dbReference type="ChEBI" id="CHEBI:15377"/>
        <dbReference type="ChEBI" id="CHEBI:15378"/>
        <dbReference type="ChEBI" id="CHEBI:29067"/>
        <dbReference type="ChEBI" id="CHEBI:30879"/>
        <dbReference type="ChEBI" id="CHEBI:33308"/>
        <dbReference type="EC" id="3.1.1.1"/>
    </reaction>
</comment>
<comment type="catalytic activity">
    <reaction evidence="5">
        <text>all-trans-retinyl hexadecanoate + H2O = all-trans-retinol + hexadecanoate + H(+)</text>
        <dbReference type="Rhea" id="RHEA:13933"/>
        <dbReference type="ChEBI" id="CHEBI:7896"/>
        <dbReference type="ChEBI" id="CHEBI:15377"/>
        <dbReference type="ChEBI" id="CHEBI:15378"/>
        <dbReference type="ChEBI" id="CHEBI:17336"/>
        <dbReference type="ChEBI" id="CHEBI:17616"/>
    </reaction>
    <physiologicalReaction direction="left-to-right" evidence="9">
        <dbReference type="Rhea" id="RHEA:13934"/>
    </physiologicalReaction>
</comment>
<comment type="biophysicochemical properties">
    <kinetics>
        <KM evidence="5">0.89 uM for retinyl palmitate</KM>
        <text evidence="5">kcat is 0.19 min(-1) with retinyl palmitate as substrate.</text>
    </kinetics>
</comment>
<comment type="subcellular location">
    <subcellularLocation>
        <location>Endoplasmic reticulum lumen</location>
    </subcellularLocation>
    <subcellularLocation>
        <location evidence="6">Microsome membrane</location>
    </subcellularLocation>
</comment>
<comment type="tissue specificity">
    <text evidence="5">Expressed in liver.</text>
</comment>
<comment type="similarity">
    <text evidence="8">Belongs to the type-B carboxylesterase/lipase family.</text>
</comment>
<proteinExistence type="evidence at protein level"/>
<protein>
    <recommendedName>
        <fullName>Carboxylesterase 1E</fullName>
        <ecNumber>3.1.1.1</ecNumber>
    </recommendedName>
    <alternativeName>
        <fullName evidence="7">Carboxyesterase ES-3</fullName>
    </alternativeName>
    <alternativeName>
        <fullName>ES-HTEL</fullName>
    </alternativeName>
    <alternativeName>
        <fullName>Egasyn</fullName>
    </alternativeName>
    <alternativeName>
        <fullName>Liver carboxylesterase 3</fullName>
    </alternativeName>
    <alternativeName>
        <fullName>pI 5.5 esterase</fullName>
    </alternativeName>
</protein>
<evidence type="ECO:0000250" key="1"/>
<evidence type="ECO:0000250" key="2">
    <source>
        <dbReference type="UniProtKB" id="P23141"/>
    </source>
</evidence>
<evidence type="ECO:0000255" key="3"/>
<evidence type="ECO:0000255" key="4">
    <source>
        <dbReference type="PROSITE-ProRule" id="PRU10039"/>
    </source>
</evidence>
<evidence type="ECO:0000269" key="5">
    <source>
    </source>
</evidence>
<evidence type="ECO:0000269" key="6">
    <source>
    </source>
</evidence>
<evidence type="ECO:0000303" key="7">
    <source>
    </source>
</evidence>
<evidence type="ECO:0000305" key="8"/>
<evidence type="ECO:0000305" key="9">
    <source>
    </source>
</evidence>
<accession>Q63108</accession>
<feature type="signal peptide" evidence="1">
    <location>
        <begin position="1"/>
        <end position="18"/>
    </location>
</feature>
<feature type="chain" id="PRO_0000008580" description="Carboxylesterase 1E">
    <location>
        <begin position="19"/>
        <end position="561"/>
    </location>
</feature>
<feature type="short sequence motif" description="Prevents secretion from ER" evidence="3">
    <location>
        <begin position="558"/>
        <end position="561"/>
    </location>
</feature>
<feature type="active site" description="Acyl-ester intermediate" evidence="4">
    <location>
        <position position="221"/>
    </location>
</feature>
<feature type="active site" description="Charge relay system" evidence="2">
    <location>
        <position position="353"/>
    </location>
</feature>
<feature type="active site" description="Charge relay system" evidence="2">
    <location>
        <position position="466"/>
    </location>
</feature>
<feature type="glycosylation site" description="N-linked (GlcNAc...) asparagine" evidence="3">
    <location>
        <position position="79"/>
    </location>
</feature>
<feature type="glycosylation site" description="N-linked (GlcNAc...) asparagine" evidence="3">
    <location>
        <position position="107"/>
    </location>
</feature>
<feature type="glycosylation site" description="N-linked (GlcNAc...) asparagine" evidence="3">
    <location>
        <position position="489"/>
    </location>
</feature>
<feature type="disulfide bond" evidence="2">
    <location>
        <begin position="87"/>
        <end position="116"/>
    </location>
</feature>
<feature type="disulfide bond" evidence="2">
    <location>
        <begin position="273"/>
        <end position="284"/>
    </location>
</feature>
<dbReference type="EC" id="3.1.1.1"/>
<dbReference type="EMBL" id="X81395">
    <property type="protein sequence ID" value="CAA57158.1"/>
    <property type="molecule type" value="mRNA"/>
</dbReference>
<dbReference type="PIR" id="JC2447">
    <property type="entry name" value="JC2447"/>
</dbReference>
<dbReference type="SMR" id="Q63108"/>
<dbReference type="FunCoup" id="Q63108">
    <property type="interactions" value="19"/>
</dbReference>
<dbReference type="ChEMBL" id="CHEMBL2771"/>
<dbReference type="SwissLipids" id="SLP:000001459"/>
<dbReference type="ESTHER" id="ratno-Ces1e">
    <property type="family name" value="Carb_B_Chordata"/>
</dbReference>
<dbReference type="GlyCosmos" id="Q63108">
    <property type="glycosylation" value="3 sites, No reported glycans"/>
</dbReference>
<dbReference type="GlyGen" id="Q63108">
    <property type="glycosylation" value="3 sites"/>
</dbReference>
<dbReference type="iPTMnet" id="Q63108"/>
<dbReference type="PhosphoSitePlus" id="Q63108"/>
<dbReference type="PeptideAtlas" id="Q63108"/>
<dbReference type="AGR" id="RGD:621508"/>
<dbReference type="RGD" id="621508">
    <property type="gene designation" value="Ces1e"/>
</dbReference>
<dbReference type="InParanoid" id="Q63108"/>
<dbReference type="OrthoDB" id="3200163at2759"/>
<dbReference type="PhylomeDB" id="Q63108"/>
<dbReference type="BRENDA" id="3.1.1.1">
    <property type="organism ID" value="5301"/>
</dbReference>
<dbReference type="PRO" id="PR:Q63108"/>
<dbReference type="Proteomes" id="UP000002494">
    <property type="component" value="Unplaced"/>
</dbReference>
<dbReference type="GO" id="GO:0005783">
    <property type="term" value="C:endoplasmic reticulum"/>
    <property type="evidence" value="ECO:0000318"/>
    <property type="project" value="GO_Central"/>
</dbReference>
<dbReference type="GO" id="GO:0005788">
    <property type="term" value="C:endoplasmic reticulum lumen"/>
    <property type="evidence" value="ECO:0007669"/>
    <property type="project" value="UniProtKB-SubCell"/>
</dbReference>
<dbReference type="GO" id="GO:0043231">
    <property type="term" value="C:intracellular membrane-bounded organelle"/>
    <property type="evidence" value="ECO:0000314"/>
    <property type="project" value="UniProtKB"/>
</dbReference>
<dbReference type="GO" id="GO:0005811">
    <property type="term" value="C:lipid droplet"/>
    <property type="evidence" value="ECO:0000318"/>
    <property type="project" value="GO_Central"/>
</dbReference>
<dbReference type="GO" id="GO:0016020">
    <property type="term" value="C:membrane"/>
    <property type="evidence" value="ECO:0007669"/>
    <property type="project" value="UniProtKB-KW"/>
</dbReference>
<dbReference type="GO" id="GO:0047376">
    <property type="term" value="F:all-trans-retinyl-palmitate hydrolase, all-trans-retinol forming activity"/>
    <property type="evidence" value="ECO:0007669"/>
    <property type="project" value="RHEA"/>
</dbReference>
<dbReference type="GO" id="GO:0106435">
    <property type="term" value="F:carboxylesterase activity"/>
    <property type="evidence" value="ECO:0007669"/>
    <property type="project" value="UniProtKB-EC"/>
</dbReference>
<dbReference type="GO" id="GO:0052689">
    <property type="term" value="F:carboxylic ester hydrolase activity"/>
    <property type="evidence" value="ECO:0000318"/>
    <property type="project" value="GO_Central"/>
</dbReference>
<dbReference type="GO" id="GO:0050253">
    <property type="term" value="F:retinyl-palmitate esterase activity"/>
    <property type="evidence" value="ECO:0000314"/>
    <property type="project" value="UniProtKB"/>
</dbReference>
<dbReference type="GO" id="GO:0016042">
    <property type="term" value="P:lipid catabolic process"/>
    <property type="evidence" value="ECO:0000318"/>
    <property type="project" value="GO_Central"/>
</dbReference>
<dbReference type="GO" id="GO:0001523">
    <property type="term" value="P:retinoid metabolic process"/>
    <property type="evidence" value="ECO:0000304"/>
    <property type="project" value="UniProtKB"/>
</dbReference>
<dbReference type="CDD" id="cd00312">
    <property type="entry name" value="Esterase_lipase"/>
    <property type="match status" value="1"/>
</dbReference>
<dbReference type="FunFam" id="3.40.50.1820:FF:000011">
    <property type="entry name" value="Carboxylic ester hydrolase"/>
    <property type="match status" value="1"/>
</dbReference>
<dbReference type="Gene3D" id="3.40.50.1820">
    <property type="entry name" value="alpha/beta hydrolase"/>
    <property type="match status" value="1"/>
</dbReference>
<dbReference type="InterPro" id="IPR029058">
    <property type="entry name" value="AB_hydrolase_fold"/>
</dbReference>
<dbReference type="InterPro" id="IPR002018">
    <property type="entry name" value="CarbesteraseB"/>
</dbReference>
<dbReference type="InterPro" id="IPR019826">
    <property type="entry name" value="Carboxylesterase_B_AS"/>
</dbReference>
<dbReference type="InterPro" id="IPR019819">
    <property type="entry name" value="Carboxylesterase_B_CS"/>
</dbReference>
<dbReference type="InterPro" id="IPR050309">
    <property type="entry name" value="Type-B_Carboxylest/Lipase"/>
</dbReference>
<dbReference type="PANTHER" id="PTHR11559">
    <property type="entry name" value="CARBOXYLESTERASE"/>
    <property type="match status" value="1"/>
</dbReference>
<dbReference type="Pfam" id="PF00135">
    <property type="entry name" value="COesterase"/>
    <property type="match status" value="1"/>
</dbReference>
<dbReference type="SUPFAM" id="SSF53474">
    <property type="entry name" value="alpha/beta-Hydrolases"/>
    <property type="match status" value="1"/>
</dbReference>
<dbReference type="PROSITE" id="PS00122">
    <property type="entry name" value="CARBOXYLESTERASE_B_1"/>
    <property type="match status" value="1"/>
</dbReference>
<dbReference type="PROSITE" id="PS00941">
    <property type="entry name" value="CARBOXYLESTERASE_B_2"/>
    <property type="match status" value="1"/>
</dbReference>
<name>EST1E_RAT</name>
<sequence length="561" mass="61715">MCLYALILVFLAAFTAGGHPSSLPVVDTLQGKVLGKYVSLEGFTQPVAVFLGVPFAKPPLGSLRFAPPQPAEPWSFVKNTTSYPPMCSQDPVAGQIVNDLLTNWEENISLQFSEDCLYLNIYTPADLTKRDRLPVMVWIHGGGLVLGGASTYDGLALSTHENVVVVVIQYRLGIWGFFSTGDEHSRGNWGHLDQVAALHWVQDNIDNFGGDPGSVTIFGESAGGESVSVLVLSPLAKNLFHKAISESGVALTAGLVKKNTRPLAEKIAVVSGCKSTTSASMVHCLRQKTEEELLETTLKLNLFSLDLHGDSRQSYPFVPTVLDGVVLPKMPEEILAEKDFNTVPYIVGINKQEFGWILPTMMNYPPSDMKLDPMTATSLLKKSSFLLNLPEEAIPVAVEKYLRHTDDPDRNKDQLLELIGDVIFGVPSVIVSRGHRDAGARTYMYEFQYRPSFSSKMKPSTVVGDHGDEIYSVFGAPILRGGTSKEEINLSKMMMKFWANFARNGNPNGQGLPHWPEYDQKEGYLQIGATTQQAQKLKEKEVAFWSELLAMKPLHAGHTEL</sequence>
<organism>
    <name type="scientific">Rattus norvegicus</name>
    <name type="common">Rat</name>
    <dbReference type="NCBI Taxonomy" id="10116"/>
    <lineage>
        <taxon>Eukaryota</taxon>
        <taxon>Metazoa</taxon>
        <taxon>Chordata</taxon>
        <taxon>Craniata</taxon>
        <taxon>Vertebrata</taxon>
        <taxon>Euteleostomi</taxon>
        <taxon>Mammalia</taxon>
        <taxon>Eutheria</taxon>
        <taxon>Euarchontoglires</taxon>
        <taxon>Glires</taxon>
        <taxon>Rodentia</taxon>
        <taxon>Myomorpha</taxon>
        <taxon>Muroidea</taxon>
        <taxon>Muridae</taxon>
        <taxon>Murinae</taxon>
        <taxon>Rattus</taxon>
    </lineage>
</organism>
<gene>
    <name type="primary">Ces1e</name>
    <name type="synonym">Ces1</name>
</gene>
<reference key="1">
    <citation type="journal article" date="1994" name="Biochem. Biophys. Res. Commun.">
        <title>Cloning and sequencing of rat liver carboxylesterase ES-3 (egasyn).</title>
        <authorList>
            <person name="Robbi M."/>
            <person name="Beaufay H."/>
        </authorList>
    </citation>
    <scope>NUCLEOTIDE SEQUENCE [MRNA]</scope>
    <source>
        <strain>Sprague-Dawley</strain>
        <tissue>Liver</tissue>
    </source>
</reference>
<reference key="2">
    <citation type="journal article" date="2002" name="Eur. J. Biochem.">
        <title>Identification of microsomal rat liver carboxylesterases and their activity with retinyl palmitate.</title>
        <authorList>
            <person name="Sanghani S.P."/>
            <person name="Davis W.I."/>
            <person name="Dumaual N.G."/>
            <person name="Mahrenholz A."/>
            <person name="Bosron W.F."/>
        </authorList>
    </citation>
    <scope>CATALYTIC ACTIVITY</scope>
    <scope>SUBCELLULAR LOCATION</scope>
    <scope>FUNCTION</scope>
    <scope>TISSUE SPECIFICITY</scope>
    <scope>BIOPHYSICOCHEMICAL PROPERTIES</scope>
</reference>